<name>CSD_HAEIN</name>
<reference key="1">
    <citation type="journal article" date="1995" name="Science">
        <title>Whole-genome random sequencing and assembly of Haemophilus influenzae Rd.</title>
        <authorList>
            <person name="Fleischmann R.D."/>
            <person name="Adams M.D."/>
            <person name="White O."/>
            <person name="Clayton R.A."/>
            <person name="Kirkness E.F."/>
            <person name="Kerlavage A.R."/>
            <person name="Bult C.J."/>
            <person name="Tomb J.-F."/>
            <person name="Dougherty B.A."/>
            <person name="Merrick J.M."/>
            <person name="McKenney K."/>
            <person name="Sutton G.G."/>
            <person name="FitzHugh W."/>
            <person name="Fields C.A."/>
            <person name="Gocayne J.D."/>
            <person name="Scott J.D."/>
            <person name="Shirley R."/>
            <person name="Liu L.-I."/>
            <person name="Glodek A."/>
            <person name="Kelley J.M."/>
            <person name="Weidman J.F."/>
            <person name="Phillips C.A."/>
            <person name="Spriggs T."/>
            <person name="Hedblom E."/>
            <person name="Cotton M.D."/>
            <person name="Utterback T.R."/>
            <person name="Hanna M.C."/>
            <person name="Nguyen D.T."/>
            <person name="Saudek D.M."/>
            <person name="Brandon R.C."/>
            <person name="Fine L.D."/>
            <person name="Fritchman J.L."/>
            <person name="Fuhrmann J.L."/>
            <person name="Geoghagen N.S.M."/>
            <person name="Gnehm C.L."/>
            <person name="McDonald L.A."/>
            <person name="Small K.V."/>
            <person name="Fraser C.M."/>
            <person name="Smith H.O."/>
            <person name="Venter J.C."/>
        </authorList>
    </citation>
    <scope>NUCLEOTIDE SEQUENCE [LARGE SCALE GENOMIC DNA]</scope>
    <source>
        <strain>ATCC 51907 / DSM 11121 / KW20 / Rd</strain>
    </source>
</reference>
<feature type="chain" id="PRO_0000150298" description="Probable cysteine desulfurase">
    <location>
        <begin position="1"/>
        <end position="437"/>
    </location>
</feature>
<feature type="modified residue" description="N6-(pyridoxal phosphate)lysine" evidence="1">
    <location>
        <position position="258"/>
    </location>
</feature>
<sequence length="437" mass="49048">MIRFIFKHKKMHKPKELVFGQTIIQLNQVNGADKRKLIWLLIIKRSRQAFPYFQREDAVIYLDNAATTLKPQVLIDRTAEFYASAGSVHRSQYDAAQTVQYEQARTQVKEWVHAEDKHAVIWTSGTTHAINLVANGLMPQLNAEDEILISQADHHANFVTWHETAKKCGAKIQVLPILDNWLIDENALISALSEKTKLVALNFVSNVTGTEQPIKRLIQLIRKHSNALVLVDAAQAISHIKIDLQDLDADFLAFSAHKIYGPNGLGVLTGKLTALSQLQPLFFGGKMVDRVSNDRITFAELPYRLEAGTPNIAGVIGFNAVLDWLQKWDFTAAEQYAISLAESVKVRLKSYENCRLFNSPQASTVVCFVFDGIDCSDLSTLLSEQNIALRVGEHCAQPYLARLGERTTLRLSFAPYNTQEDVEAFFTALDKALDLLQ</sequence>
<proteinExistence type="inferred from homology"/>
<accession>Q57476</accession>
<accession>O05054</accession>
<evidence type="ECO:0000250" key="1"/>
<evidence type="ECO:0000305" key="2"/>
<protein>
    <recommendedName>
        <fullName>Probable cysteine desulfurase</fullName>
        <ecNumber>2.8.1.7</ecNumber>
    </recommendedName>
</protein>
<gene>
    <name type="primary">csd</name>
    <name type="ordered locus">HI_1295</name>
</gene>
<keyword id="KW-0663">Pyridoxal phosphate</keyword>
<keyword id="KW-1185">Reference proteome</keyword>
<keyword id="KW-0808">Transferase</keyword>
<dbReference type="EC" id="2.8.1.7"/>
<dbReference type="EMBL" id="L42023">
    <property type="protein sequence ID" value="AAC22941.1"/>
    <property type="molecule type" value="Genomic_DNA"/>
</dbReference>
<dbReference type="PIR" id="I64114">
    <property type="entry name" value="I64114"/>
</dbReference>
<dbReference type="RefSeq" id="NP_439446.2">
    <property type="nucleotide sequence ID" value="NC_000907.1"/>
</dbReference>
<dbReference type="SMR" id="Q57476"/>
<dbReference type="STRING" id="71421.HI_1295"/>
<dbReference type="EnsemblBacteria" id="AAC22941">
    <property type="protein sequence ID" value="AAC22941"/>
    <property type="gene ID" value="HI_1295"/>
</dbReference>
<dbReference type="KEGG" id="hin:HI_1295"/>
<dbReference type="PATRIC" id="fig|71421.8.peg.1346"/>
<dbReference type="eggNOG" id="COG0520">
    <property type="taxonomic scope" value="Bacteria"/>
</dbReference>
<dbReference type="HOGENOM" id="CLU_003433_2_3_6"/>
<dbReference type="OrthoDB" id="9808002at2"/>
<dbReference type="PhylomeDB" id="Q57476"/>
<dbReference type="Proteomes" id="UP000000579">
    <property type="component" value="Chromosome"/>
</dbReference>
<dbReference type="GO" id="GO:0031071">
    <property type="term" value="F:cysteine desulfurase activity"/>
    <property type="evidence" value="ECO:0007669"/>
    <property type="project" value="UniProtKB-EC"/>
</dbReference>
<dbReference type="GO" id="GO:0030170">
    <property type="term" value="F:pyridoxal phosphate binding"/>
    <property type="evidence" value="ECO:0007669"/>
    <property type="project" value="InterPro"/>
</dbReference>
<dbReference type="GO" id="GO:0006534">
    <property type="term" value="P:cysteine metabolic process"/>
    <property type="evidence" value="ECO:0007669"/>
    <property type="project" value="InterPro"/>
</dbReference>
<dbReference type="CDD" id="cd06453">
    <property type="entry name" value="SufS_like"/>
    <property type="match status" value="1"/>
</dbReference>
<dbReference type="Gene3D" id="3.90.1150.10">
    <property type="entry name" value="Aspartate Aminotransferase, domain 1"/>
    <property type="match status" value="1"/>
</dbReference>
<dbReference type="Gene3D" id="3.40.640.10">
    <property type="entry name" value="Type I PLP-dependent aspartate aminotransferase-like (Major domain)"/>
    <property type="match status" value="1"/>
</dbReference>
<dbReference type="InterPro" id="IPR000192">
    <property type="entry name" value="Aminotrans_V_dom"/>
</dbReference>
<dbReference type="InterPro" id="IPR010970">
    <property type="entry name" value="Cys_dSase_SufS"/>
</dbReference>
<dbReference type="InterPro" id="IPR016454">
    <property type="entry name" value="Cysteine_dSase"/>
</dbReference>
<dbReference type="InterPro" id="IPR015424">
    <property type="entry name" value="PyrdxlP-dep_Trfase"/>
</dbReference>
<dbReference type="InterPro" id="IPR015421">
    <property type="entry name" value="PyrdxlP-dep_Trfase_major"/>
</dbReference>
<dbReference type="InterPro" id="IPR015422">
    <property type="entry name" value="PyrdxlP-dep_Trfase_small"/>
</dbReference>
<dbReference type="PANTHER" id="PTHR43586">
    <property type="entry name" value="CYSTEINE DESULFURASE"/>
    <property type="match status" value="1"/>
</dbReference>
<dbReference type="PANTHER" id="PTHR43586:SF8">
    <property type="entry name" value="CYSTEINE DESULFURASE 1, CHLOROPLASTIC"/>
    <property type="match status" value="1"/>
</dbReference>
<dbReference type="Pfam" id="PF00266">
    <property type="entry name" value="Aminotran_5"/>
    <property type="match status" value="1"/>
</dbReference>
<dbReference type="PIRSF" id="PIRSF005572">
    <property type="entry name" value="NifS"/>
    <property type="match status" value="1"/>
</dbReference>
<dbReference type="SUPFAM" id="SSF53383">
    <property type="entry name" value="PLP-dependent transferases"/>
    <property type="match status" value="1"/>
</dbReference>
<organism>
    <name type="scientific">Haemophilus influenzae (strain ATCC 51907 / DSM 11121 / KW20 / Rd)</name>
    <dbReference type="NCBI Taxonomy" id="71421"/>
    <lineage>
        <taxon>Bacteria</taxon>
        <taxon>Pseudomonadati</taxon>
        <taxon>Pseudomonadota</taxon>
        <taxon>Gammaproteobacteria</taxon>
        <taxon>Pasteurellales</taxon>
        <taxon>Pasteurellaceae</taxon>
        <taxon>Haemophilus</taxon>
    </lineage>
</organism>
<comment type="function">
    <text evidence="1">Catalyzes the removal of elemental sulfur and selenium atoms from L-cysteine, L-cystine, L-selenocysteine, and L-selenocystine to produce L-alanine.</text>
</comment>
<comment type="catalytic activity">
    <reaction>
        <text>(sulfur carrier)-H + L-cysteine = (sulfur carrier)-SH + L-alanine</text>
        <dbReference type="Rhea" id="RHEA:43892"/>
        <dbReference type="Rhea" id="RHEA-COMP:14737"/>
        <dbReference type="Rhea" id="RHEA-COMP:14739"/>
        <dbReference type="ChEBI" id="CHEBI:29917"/>
        <dbReference type="ChEBI" id="CHEBI:35235"/>
        <dbReference type="ChEBI" id="CHEBI:57972"/>
        <dbReference type="ChEBI" id="CHEBI:64428"/>
        <dbReference type="EC" id="2.8.1.7"/>
    </reaction>
</comment>
<comment type="cofactor">
    <cofactor evidence="1">
        <name>pyridoxal 5'-phosphate</name>
        <dbReference type="ChEBI" id="CHEBI:597326"/>
    </cofactor>
</comment>
<comment type="similarity">
    <text evidence="2">Belongs to the class-V pyridoxal-phosphate-dependent aminotransferase family. Csd subfamily.</text>
</comment>